<gene>
    <name type="primary">pta</name>
    <name type="ordered locus">MG299</name>
</gene>
<proteinExistence type="inferred from homology"/>
<keyword id="KW-0012">Acyltransferase</keyword>
<keyword id="KW-0963">Cytoplasm</keyword>
<keyword id="KW-1185">Reference proteome</keyword>
<keyword id="KW-0808">Transferase</keyword>
<dbReference type="EC" id="2.3.1.8"/>
<dbReference type="EMBL" id="L43967">
    <property type="protein sequence ID" value="AAC71521.1"/>
    <property type="molecule type" value="Genomic_DNA"/>
</dbReference>
<dbReference type="PIR" id="A64233">
    <property type="entry name" value="A64233"/>
</dbReference>
<dbReference type="RefSeq" id="WP_009885878.1">
    <property type="nucleotide sequence ID" value="NC_000908.2"/>
</dbReference>
<dbReference type="SMR" id="P47541"/>
<dbReference type="FunCoup" id="P47541">
    <property type="interactions" value="49"/>
</dbReference>
<dbReference type="STRING" id="243273.MG_299"/>
<dbReference type="GeneID" id="88282462"/>
<dbReference type="KEGG" id="mge:MG_299"/>
<dbReference type="eggNOG" id="COG0280">
    <property type="taxonomic scope" value="Bacteria"/>
</dbReference>
<dbReference type="HOGENOM" id="CLU_019723_0_1_14"/>
<dbReference type="InParanoid" id="P47541"/>
<dbReference type="OrthoDB" id="9805787at2"/>
<dbReference type="BioCyc" id="MGEN243273:G1GJ2-368-MONOMER"/>
<dbReference type="UniPathway" id="UPA00340">
    <property type="reaction ID" value="UER00459"/>
</dbReference>
<dbReference type="Proteomes" id="UP000000807">
    <property type="component" value="Chromosome"/>
</dbReference>
<dbReference type="GO" id="GO:0005737">
    <property type="term" value="C:cytoplasm"/>
    <property type="evidence" value="ECO:0007669"/>
    <property type="project" value="UniProtKB-SubCell"/>
</dbReference>
<dbReference type="GO" id="GO:0008959">
    <property type="term" value="F:phosphate acetyltransferase activity"/>
    <property type="evidence" value="ECO:0007669"/>
    <property type="project" value="UniProtKB-EC"/>
</dbReference>
<dbReference type="GO" id="GO:0006085">
    <property type="term" value="P:acetyl-CoA biosynthetic process"/>
    <property type="evidence" value="ECO:0007669"/>
    <property type="project" value="UniProtKB-UniPathway"/>
</dbReference>
<dbReference type="Gene3D" id="3.40.50.10950">
    <property type="match status" value="1"/>
</dbReference>
<dbReference type="Gene3D" id="3.40.50.10750">
    <property type="entry name" value="Isocitrate/Isopropylmalate dehydrogenase-like"/>
    <property type="match status" value="1"/>
</dbReference>
<dbReference type="InterPro" id="IPR012147">
    <property type="entry name" value="P_Ac_Bu_trans"/>
</dbReference>
<dbReference type="InterPro" id="IPR004614">
    <property type="entry name" value="P_AcTrfase"/>
</dbReference>
<dbReference type="InterPro" id="IPR042113">
    <property type="entry name" value="P_AcTrfase_dom1"/>
</dbReference>
<dbReference type="InterPro" id="IPR042112">
    <property type="entry name" value="P_AcTrfase_dom2"/>
</dbReference>
<dbReference type="InterPro" id="IPR050500">
    <property type="entry name" value="Phos_Acetyltrans/Butyryltrans"/>
</dbReference>
<dbReference type="InterPro" id="IPR002505">
    <property type="entry name" value="PTA_PTB"/>
</dbReference>
<dbReference type="NCBIfam" id="NF007233">
    <property type="entry name" value="PRK09653.1"/>
    <property type="match status" value="1"/>
</dbReference>
<dbReference type="NCBIfam" id="TIGR00651">
    <property type="entry name" value="pta"/>
    <property type="match status" value="1"/>
</dbReference>
<dbReference type="PANTHER" id="PTHR43356">
    <property type="entry name" value="PHOSPHATE ACETYLTRANSFERASE"/>
    <property type="match status" value="1"/>
</dbReference>
<dbReference type="PANTHER" id="PTHR43356:SF3">
    <property type="entry name" value="PHOSPHATE ACETYLTRANSFERASE"/>
    <property type="match status" value="1"/>
</dbReference>
<dbReference type="Pfam" id="PF01515">
    <property type="entry name" value="PTA_PTB"/>
    <property type="match status" value="1"/>
</dbReference>
<dbReference type="PIRSF" id="PIRSF000428">
    <property type="entry name" value="P_Ac_trans"/>
    <property type="match status" value="1"/>
</dbReference>
<dbReference type="SUPFAM" id="SSF53659">
    <property type="entry name" value="Isocitrate/Isopropylmalate dehydrogenase-like"/>
    <property type="match status" value="1"/>
</dbReference>
<protein>
    <recommendedName>
        <fullName>Phosphate acetyltransferase</fullName>
        <ecNumber>2.3.1.8</ecNumber>
    </recommendedName>
    <alternativeName>
        <fullName>Phosphotransacetylase</fullName>
    </alternativeName>
</protein>
<reference key="1">
    <citation type="journal article" date="1995" name="Science">
        <title>The minimal gene complement of Mycoplasma genitalium.</title>
        <authorList>
            <person name="Fraser C.M."/>
            <person name="Gocayne J.D."/>
            <person name="White O."/>
            <person name="Adams M.D."/>
            <person name="Clayton R.A."/>
            <person name="Fleischmann R.D."/>
            <person name="Bult C.J."/>
            <person name="Kerlavage A.R."/>
            <person name="Sutton G.G."/>
            <person name="Kelley J.M."/>
            <person name="Fritchman J.L."/>
            <person name="Weidman J.F."/>
            <person name="Small K.V."/>
            <person name="Sandusky M."/>
            <person name="Fuhrmann J.L."/>
            <person name="Nguyen D.T."/>
            <person name="Utterback T.R."/>
            <person name="Saudek D.M."/>
            <person name="Phillips C.A."/>
            <person name="Merrick J.M."/>
            <person name="Tomb J.-F."/>
            <person name="Dougherty B.A."/>
            <person name="Bott K.F."/>
            <person name="Hu P.-C."/>
            <person name="Lucier T.S."/>
            <person name="Peterson S.N."/>
            <person name="Smith H.O."/>
            <person name="Hutchison C.A. III"/>
            <person name="Venter J.C."/>
        </authorList>
    </citation>
    <scope>NUCLEOTIDE SEQUENCE [LARGE SCALE GENOMIC DNA]</scope>
    <source>
        <strain>ATCC 33530 / DSM 19775 / NCTC 10195 / G37</strain>
    </source>
</reference>
<sequence>MSVIDIFKKRLQAVSKKPVIIFPEGWSASVLKAVEMLNESKLIQPAVIFHNRQEIPANFDKKITHYVIDEMDLTSYANFVYEKRKHKGMDLKEAQKFVRDPSSLAATLVALKVVDGEVCGKEYATKDTLRPALQLLATGNFVSSVFIMEKGEERLYFTDCAFAVYPNSQELATIAENTFNFAKSLNEDEIKMAFLSYSTLGSGKGEMVDKVVLATKLFLEKHPELHQSVCGELQFDAAFVEKVRLQKAPQLTWKNSANIYVFPNLDAGNIAYKIAQRLGGYDAIGPIVLGLSSPVNDLSRGASVSDIFNVGIITAAQAIK</sequence>
<evidence type="ECO:0000305" key="1"/>
<comment type="catalytic activity">
    <reaction>
        <text>acetyl-CoA + phosphate = acetyl phosphate + CoA</text>
        <dbReference type="Rhea" id="RHEA:19521"/>
        <dbReference type="ChEBI" id="CHEBI:22191"/>
        <dbReference type="ChEBI" id="CHEBI:43474"/>
        <dbReference type="ChEBI" id="CHEBI:57287"/>
        <dbReference type="ChEBI" id="CHEBI:57288"/>
        <dbReference type="EC" id="2.3.1.8"/>
    </reaction>
</comment>
<comment type="pathway">
    <text>Metabolic intermediate biosynthesis; acetyl-CoA biosynthesis; acetyl-CoA from acetate: step 2/2.</text>
</comment>
<comment type="subcellular location">
    <subcellularLocation>
        <location evidence="1">Cytoplasm</location>
    </subcellularLocation>
</comment>
<comment type="similarity">
    <text evidence="1">Belongs to the phosphate acetyltransferase and butyryltransferase family.</text>
</comment>
<organism>
    <name type="scientific">Mycoplasma genitalium (strain ATCC 33530 / DSM 19775 / NCTC 10195 / G37)</name>
    <name type="common">Mycoplasmoides genitalium</name>
    <dbReference type="NCBI Taxonomy" id="243273"/>
    <lineage>
        <taxon>Bacteria</taxon>
        <taxon>Bacillati</taxon>
        <taxon>Mycoplasmatota</taxon>
        <taxon>Mycoplasmoidales</taxon>
        <taxon>Mycoplasmoidaceae</taxon>
        <taxon>Mycoplasmoides</taxon>
    </lineage>
</organism>
<name>PTAS_MYCGE</name>
<accession>P47541</accession>
<feature type="chain" id="PRO_0000179133" description="Phosphate acetyltransferase">
    <location>
        <begin position="1"/>
        <end position="320"/>
    </location>
</feature>